<name>CCSA_OENGL</name>
<dbReference type="EMBL" id="EU262890">
    <property type="protein sequence ID" value="ABX10085.1"/>
    <property type="molecule type" value="Genomic_DNA"/>
</dbReference>
<dbReference type="RefSeq" id="YP_001687331.1">
    <property type="nucleotide sequence ID" value="NC_010360.2"/>
</dbReference>
<dbReference type="SMR" id="B0Z592"/>
<dbReference type="GeneID" id="5955266"/>
<dbReference type="GO" id="GO:0009535">
    <property type="term" value="C:chloroplast thylakoid membrane"/>
    <property type="evidence" value="ECO:0007669"/>
    <property type="project" value="UniProtKB-SubCell"/>
</dbReference>
<dbReference type="GO" id="GO:0005886">
    <property type="term" value="C:plasma membrane"/>
    <property type="evidence" value="ECO:0007669"/>
    <property type="project" value="TreeGrafter"/>
</dbReference>
<dbReference type="GO" id="GO:0020037">
    <property type="term" value="F:heme binding"/>
    <property type="evidence" value="ECO:0007669"/>
    <property type="project" value="InterPro"/>
</dbReference>
<dbReference type="GO" id="GO:0017004">
    <property type="term" value="P:cytochrome complex assembly"/>
    <property type="evidence" value="ECO:0007669"/>
    <property type="project" value="UniProtKB-UniRule"/>
</dbReference>
<dbReference type="HAMAP" id="MF_01391">
    <property type="entry name" value="CytC_CcsA"/>
    <property type="match status" value="1"/>
</dbReference>
<dbReference type="InterPro" id="IPR002541">
    <property type="entry name" value="Cyt_c_assembly"/>
</dbReference>
<dbReference type="InterPro" id="IPR017562">
    <property type="entry name" value="Cyt_c_biogenesis_CcsA"/>
</dbReference>
<dbReference type="InterPro" id="IPR045062">
    <property type="entry name" value="Cyt_c_biogenesis_CcsA/CcmC"/>
</dbReference>
<dbReference type="NCBIfam" id="TIGR03144">
    <property type="entry name" value="cytochr_II_ccsB"/>
    <property type="match status" value="1"/>
</dbReference>
<dbReference type="PANTHER" id="PTHR30071:SF1">
    <property type="entry name" value="CYTOCHROME B_B6 PROTEIN-RELATED"/>
    <property type="match status" value="1"/>
</dbReference>
<dbReference type="PANTHER" id="PTHR30071">
    <property type="entry name" value="HEME EXPORTER PROTEIN C"/>
    <property type="match status" value="1"/>
</dbReference>
<dbReference type="Pfam" id="PF01578">
    <property type="entry name" value="Cytochrom_C_asm"/>
    <property type="match status" value="1"/>
</dbReference>
<organism>
    <name type="scientific">Oenothera glazioviana</name>
    <name type="common">Large-flowered evening primrose</name>
    <name type="synonym">Oenothera erythrosepala</name>
    <dbReference type="NCBI Taxonomy" id="482428"/>
    <lineage>
        <taxon>Eukaryota</taxon>
        <taxon>Viridiplantae</taxon>
        <taxon>Streptophyta</taxon>
        <taxon>Embryophyta</taxon>
        <taxon>Tracheophyta</taxon>
        <taxon>Spermatophyta</taxon>
        <taxon>Magnoliopsida</taxon>
        <taxon>eudicotyledons</taxon>
        <taxon>Gunneridae</taxon>
        <taxon>Pentapetalae</taxon>
        <taxon>rosids</taxon>
        <taxon>malvids</taxon>
        <taxon>Myrtales</taxon>
        <taxon>Onagraceae</taxon>
        <taxon>Onagroideae</taxon>
        <taxon>Onagreae</taxon>
        <taxon>Oenothera</taxon>
    </lineage>
</organism>
<gene>
    <name evidence="1" type="primary">ccsA</name>
</gene>
<geneLocation type="chloroplast"/>
<keyword id="KW-0150">Chloroplast</keyword>
<keyword id="KW-0201">Cytochrome c-type biogenesis</keyword>
<keyword id="KW-0472">Membrane</keyword>
<keyword id="KW-0934">Plastid</keyword>
<keyword id="KW-0793">Thylakoid</keyword>
<keyword id="KW-0812">Transmembrane</keyword>
<keyword id="KW-1133">Transmembrane helix</keyword>
<proteinExistence type="inferred from homology"/>
<reference key="1">
    <citation type="journal article" date="2008" name="Nucleic Acids Res.">
        <title>The complete nucleotide sequences of the five genetically distinct plastid genomes of Oenothera, subsection Oenothera: I. Sequence evaluation and plastome evolution.</title>
        <authorList>
            <person name="Greiner S."/>
            <person name="Wang X."/>
            <person name="Rauwolf U."/>
            <person name="Silber M.V."/>
            <person name="Mayer K."/>
            <person name="Meurer J."/>
            <person name="Haberer G."/>
            <person name="Herrmann R.G."/>
        </authorList>
    </citation>
    <scope>NUCLEOTIDE SEQUENCE [LARGE SCALE GENOMIC DNA]</scope>
    <source>
        <strain>cv. Rr-lamarckiana Sweden</strain>
    </source>
</reference>
<protein>
    <recommendedName>
        <fullName evidence="1">Cytochrome c biogenesis protein CcsA</fullName>
    </recommendedName>
</protein>
<sequence>MIFYTLEHILTHISFSLVSIGITIFLITLSVDEIIGLYDSSEKGVIGTFLCITGLLVTRWAYSGHFPLSNLYESLLFLSWSFAIIHMFPYFKKQNSYVRTITSSSTIFTQGLVTSGLLSEMQQSEILVPALQSQWLMMHVSMMVLGYAALLCGSLLSVALLVITFRKALRIFSKKKAFLKDSFSFVEIQYRNEPSNVLLSTSFISSKNYYRAQLIQQLDRWSSRIISLGFIFLTIGILSGAVWANEAWGSYWNWDPKETWAFITWTMFAIYLHTRTNPNFQSVNSAIVAFLGFIIIWICYFGVNLLGIGLHSYGSFNLH</sequence>
<feature type="chain" id="PRO_0000353778" description="Cytochrome c biogenesis protein CcsA">
    <location>
        <begin position="1"/>
        <end position="319"/>
    </location>
</feature>
<feature type="transmembrane region" description="Helical" evidence="1">
    <location>
        <begin position="9"/>
        <end position="29"/>
    </location>
</feature>
<feature type="transmembrane region" description="Helical" evidence="1">
    <location>
        <begin position="44"/>
        <end position="64"/>
    </location>
</feature>
<feature type="transmembrane region" description="Helical" evidence="1">
    <location>
        <begin position="71"/>
        <end position="91"/>
    </location>
</feature>
<feature type="transmembrane region" description="Helical" evidence="1">
    <location>
        <begin position="143"/>
        <end position="163"/>
    </location>
</feature>
<feature type="transmembrane region" description="Helical" evidence="1">
    <location>
        <begin position="225"/>
        <end position="245"/>
    </location>
</feature>
<feature type="transmembrane region" description="Helical" evidence="1">
    <location>
        <begin position="259"/>
        <end position="273"/>
    </location>
</feature>
<feature type="transmembrane region" description="Helical" evidence="1">
    <location>
        <begin position="286"/>
        <end position="306"/>
    </location>
</feature>
<evidence type="ECO:0000255" key="1">
    <source>
        <dbReference type="HAMAP-Rule" id="MF_01391"/>
    </source>
</evidence>
<comment type="function">
    <text evidence="1">Required during biogenesis of c-type cytochromes (cytochrome c6 and cytochrome f) at the step of heme attachment.</text>
</comment>
<comment type="subunit">
    <text evidence="1">May interact with Ccs1.</text>
</comment>
<comment type="subcellular location">
    <subcellularLocation>
        <location evidence="1">Plastid</location>
        <location evidence="1">Chloroplast thylakoid membrane</location>
        <topology evidence="1">Multi-pass membrane protein</topology>
    </subcellularLocation>
</comment>
<comment type="similarity">
    <text evidence="1">Belongs to the CcmF/CycK/Ccl1/NrfE/CcsA family.</text>
</comment>
<accession>B0Z592</accession>